<keyword id="KW-0378">Hydrolase</keyword>
<keyword id="KW-1185">Reference proteome</keyword>
<evidence type="ECO:0000255" key="1">
    <source>
        <dbReference type="PROSITE-ProRule" id="PRU00520"/>
    </source>
</evidence>
<evidence type="ECO:0000305" key="2"/>
<sequence length="91" mass="10119">MRRVLIRVKGKVQGVCFRRFALERARELGVTGYVTNMDDGSVQILAQGSAPLVEKLIDWCWEGSPAASVNAVEVNEDEADEIYLDFSITQS</sequence>
<accession>A1S579</accession>
<feature type="chain" id="PRO_0000326799" description="Acylphosphatase">
    <location>
        <begin position="1"/>
        <end position="91"/>
    </location>
</feature>
<feature type="domain" description="Acylphosphatase-like" evidence="1">
    <location>
        <begin position="3"/>
        <end position="90"/>
    </location>
</feature>
<feature type="active site" evidence="1">
    <location>
        <position position="18"/>
    </location>
</feature>
<feature type="active site" evidence="1">
    <location>
        <position position="36"/>
    </location>
</feature>
<name>ACYP_SHEAM</name>
<gene>
    <name type="primary">acyP</name>
    <name type="ordered locus">Sama_1328</name>
</gene>
<proteinExistence type="inferred from homology"/>
<comment type="catalytic activity">
    <reaction>
        <text>an acyl phosphate + H2O = a carboxylate + phosphate + H(+)</text>
        <dbReference type="Rhea" id="RHEA:14965"/>
        <dbReference type="ChEBI" id="CHEBI:15377"/>
        <dbReference type="ChEBI" id="CHEBI:15378"/>
        <dbReference type="ChEBI" id="CHEBI:29067"/>
        <dbReference type="ChEBI" id="CHEBI:43474"/>
        <dbReference type="ChEBI" id="CHEBI:59918"/>
        <dbReference type="EC" id="3.6.1.7"/>
    </reaction>
</comment>
<comment type="similarity">
    <text evidence="2">Belongs to the acylphosphatase family.</text>
</comment>
<organism>
    <name type="scientific">Shewanella amazonensis (strain ATCC BAA-1098 / SB2B)</name>
    <dbReference type="NCBI Taxonomy" id="326297"/>
    <lineage>
        <taxon>Bacteria</taxon>
        <taxon>Pseudomonadati</taxon>
        <taxon>Pseudomonadota</taxon>
        <taxon>Gammaproteobacteria</taxon>
        <taxon>Alteromonadales</taxon>
        <taxon>Shewanellaceae</taxon>
        <taxon>Shewanella</taxon>
    </lineage>
</organism>
<reference key="1">
    <citation type="submission" date="2006-12" db="EMBL/GenBank/DDBJ databases">
        <title>Complete sequence of Shewanella amazonensis SB2B.</title>
        <authorList>
            <consortium name="US DOE Joint Genome Institute"/>
            <person name="Copeland A."/>
            <person name="Lucas S."/>
            <person name="Lapidus A."/>
            <person name="Barry K."/>
            <person name="Detter J.C."/>
            <person name="Glavina del Rio T."/>
            <person name="Hammon N."/>
            <person name="Israni S."/>
            <person name="Dalin E."/>
            <person name="Tice H."/>
            <person name="Pitluck S."/>
            <person name="Munk A.C."/>
            <person name="Brettin T."/>
            <person name="Bruce D."/>
            <person name="Han C."/>
            <person name="Tapia R."/>
            <person name="Gilna P."/>
            <person name="Schmutz J."/>
            <person name="Larimer F."/>
            <person name="Land M."/>
            <person name="Hauser L."/>
            <person name="Kyrpides N."/>
            <person name="Mikhailova N."/>
            <person name="Fredrickson J."/>
            <person name="Richardson P."/>
        </authorList>
    </citation>
    <scope>NUCLEOTIDE SEQUENCE [LARGE SCALE GENOMIC DNA]</scope>
    <source>
        <strain>ATCC BAA-1098 / SB2B</strain>
    </source>
</reference>
<dbReference type="EC" id="3.6.1.7"/>
<dbReference type="EMBL" id="CP000507">
    <property type="protein sequence ID" value="ABL99535.1"/>
    <property type="molecule type" value="Genomic_DNA"/>
</dbReference>
<dbReference type="RefSeq" id="WP_011759443.1">
    <property type="nucleotide sequence ID" value="NC_008700.1"/>
</dbReference>
<dbReference type="SMR" id="A1S579"/>
<dbReference type="STRING" id="326297.Sama_1328"/>
<dbReference type="KEGG" id="saz:Sama_1328"/>
<dbReference type="eggNOG" id="COG1254">
    <property type="taxonomic scope" value="Bacteria"/>
</dbReference>
<dbReference type="HOGENOM" id="CLU_141932_1_1_6"/>
<dbReference type="OrthoDB" id="5295388at2"/>
<dbReference type="Proteomes" id="UP000009175">
    <property type="component" value="Chromosome"/>
</dbReference>
<dbReference type="GO" id="GO:0003998">
    <property type="term" value="F:acylphosphatase activity"/>
    <property type="evidence" value="ECO:0007669"/>
    <property type="project" value="UniProtKB-EC"/>
</dbReference>
<dbReference type="Gene3D" id="3.30.70.100">
    <property type="match status" value="1"/>
</dbReference>
<dbReference type="InterPro" id="IPR020456">
    <property type="entry name" value="Acylphosphatase"/>
</dbReference>
<dbReference type="InterPro" id="IPR001792">
    <property type="entry name" value="Acylphosphatase-like_dom"/>
</dbReference>
<dbReference type="InterPro" id="IPR036046">
    <property type="entry name" value="Acylphosphatase-like_dom_sf"/>
</dbReference>
<dbReference type="InterPro" id="IPR017968">
    <property type="entry name" value="Acylphosphatase_CS"/>
</dbReference>
<dbReference type="NCBIfam" id="NF011003">
    <property type="entry name" value="PRK14429.1"/>
    <property type="match status" value="1"/>
</dbReference>
<dbReference type="PANTHER" id="PTHR47268">
    <property type="entry name" value="ACYLPHOSPHATASE"/>
    <property type="match status" value="1"/>
</dbReference>
<dbReference type="PANTHER" id="PTHR47268:SF4">
    <property type="entry name" value="ACYLPHOSPHATASE"/>
    <property type="match status" value="1"/>
</dbReference>
<dbReference type="Pfam" id="PF00708">
    <property type="entry name" value="Acylphosphatase"/>
    <property type="match status" value="1"/>
</dbReference>
<dbReference type="PRINTS" id="PR00112">
    <property type="entry name" value="ACYLPHPHTASE"/>
</dbReference>
<dbReference type="SUPFAM" id="SSF54975">
    <property type="entry name" value="Acylphosphatase/BLUF domain-like"/>
    <property type="match status" value="1"/>
</dbReference>
<dbReference type="PROSITE" id="PS00150">
    <property type="entry name" value="ACYLPHOSPHATASE_1"/>
    <property type="match status" value="1"/>
</dbReference>
<dbReference type="PROSITE" id="PS51160">
    <property type="entry name" value="ACYLPHOSPHATASE_3"/>
    <property type="match status" value="1"/>
</dbReference>
<protein>
    <recommendedName>
        <fullName>Acylphosphatase</fullName>
        <ecNumber>3.6.1.7</ecNumber>
    </recommendedName>
    <alternativeName>
        <fullName>Acylphosphate phosphohydrolase</fullName>
    </alternativeName>
</protein>